<accession>C0ZL73</accession>
<protein>
    <recommendedName>
        <fullName evidence="1">4-hydroxy-3-methylbut-2-enyl diphosphate reductase</fullName>
        <shortName evidence="1">HMBPP reductase</shortName>
        <ecNumber evidence="1">1.17.7.4</ecNumber>
    </recommendedName>
</protein>
<proteinExistence type="inferred from homology"/>
<feature type="chain" id="PRO_1000124277" description="4-hydroxy-3-methylbut-2-enyl diphosphate reductase">
    <location>
        <begin position="1"/>
        <end position="311"/>
    </location>
</feature>
<feature type="active site" description="Proton donor" evidence="1">
    <location>
        <position position="133"/>
    </location>
</feature>
<feature type="binding site" evidence="1">
    <location>
        <position position="12"/>
    </location>
    <ligand>
        <name>[4Fe-4S] cluster</name>
        <dbReference type="ChEBI" id="CHEBI:49883"/>
    </ligand>
</feature>
<feature type="binding site" evidence="1">
    <location>
        <position position="43"/>
    </location>
    <ligand>
        <name>(2E)-4-hydroxy-3-methylbut-2-enyl diphosphate</name>
        <dbReference type="ChEBI" id="CHEBI:128753"/>
    </ligand>
</feature>
<feature type="binding site" evidence="1">
    <location>
        <position position="43"/>
    </location>
    <ligand>
        <name>dimethylallyl diphosphate</name>
        <dbReference type="ChEBI" id="CHEBI:57623"/>
    </ligand>
</feature>
<feature type="binding site" evidence="1">
    <location>
        <position position="43"/>
    </location>
    <ligand>
        <name>isopentenyl diphosphate</name>
        <dbReference type="ChEBI" id="CHEBI:128769"/>
    </ligand>
</feature>
<feature type="binding site" evidence="1">
    <location>
        <position position="81"/>
    </location>
    <ligand>
        <name>(2E)-4-hydroxy-3-methylbut-2-enyl diphosphate</name>
        <dbReference type="ChEBI" id="CHEBI:128753"/>
    </ligand>
</feature>
<feature type="binding site" evidence="1">
    <location>
        <position position="81"/>
    </location>
    <ligand>
        <name>dimethylallyl diphosphate</name>
        <dbReference type="ChEBI" id="CHEBI:57623"/>
    </ligand>
</feature>
<feature type="binding site" evidence="1">
    <location>
        <position position="81"/>
    </location>
    <ligand>
        <name>isopentenyl diphosphate</name>
        <dbReference type="ChEBI" id="CHEBI:128769"/>
    </ligand>
</feature>
<feature type="binding site" evidence="1">
    <location>
        <position position="103"/>
    </location>
    <ligand>
        <name>[4Fe-4S] cluster</name>
        <dbReference type="ChEBI" id="CHEBI:49883"/>
    </ligand>
</feature>
<feature type="binding site" evidence="1">
    <location>
        <position position="131"/>
    </location>
    <ligand>
        <name>(2E)-4-hydroxy-3-methylbut-2-enyl diphosphate</name>
        <dbReference type="ChEBI" id="CHEBI:128753"/>
    </ligand>
</feature>
<feature type="binding site" evidence="1">
    <location>
        <position position="131"/>
    </location>
    <ligand>
        <name>dimethylallyl diphosphate</name>
        <dbReference type="ChEBI" id="CHEBI:57623"/>
    </ligand>
</feature>
<feature type="binding site" evidence="1">
    <location>
        <position position="131"/>
    </location>
    <ligand>
        <name>isopentenyl diphosphate</name>
        <dbReference type="ChEBI" id="CHEBI:128769"/>
    </ligand>
</feature>
<feature type="binding site" evidence="1">
    <location>
        <position position="170"/>
    </location>
    <ligand>
        <name>(2E)-4-hydroxy-3-methylbut-2-enyl diphosphate</name>
        <dbReference type="ChEBI" id="CHEBI:128753"/>
    </ligand>
</feature>
<feature type="binding site" evidence="1">
    <location>
        <position position="198"/>
    </location>
    <ligand>
        <name>[4Fe-4S] cluster</name>
        <dbReference type="ChEBI" id="CHEBI:49883"/>
    </ligand>
</feature>
<feature type="binding site" evidence="1">
    <location>
        <position position="226"/>
    </location>
    <ligand>
        <name>(2E)-4-hydroxy-3-methylbut-2-enyl diphosphate</name>
        <dbReference type="ChEBI" id="CHEBI:128753"/>
    </ligand>
</feature>
<feature type="binding site" evidence="1">
    <location>
        <position position="226"/>
    </location>
    <ligand>
        <name>dimethylallyl diphosphate</name>
        <dbReference type="ChEBI" id="CHEBI:57623"/>
    </ligand>
</feature>
<feature type="binding site" evidence="1">
    <location>
        <position position="226"/>
    </location>
    <ligand>
        <name>isopentenyl diphosphate</name>
        <dbReference type="ChEBI" id="CHEBI:128769"/>
    </ligand>
</feature>
<feature type="binding site" evidence="1">
    <location>
        <position position="228"/>
    </location>
    <ligand>
        <name>(2E)-4-hydroxy-3-methylbut-2-enyl diphosphate</name>
        <dbReference type="ChEBI" id="CHEBI:128753"/>
    </ligand>
</feature>
<feature type="binding site" evidence="1">
    <location>
        <position position="228"/>
    </location>
    <ligand>
        <name>dimethylallyl diphosphate</name>
        <dbReference type="ChEBI" id="CHEBI:57623"/>
    </ligand>
</feature>
<feature type="binding site" evidence="1">
    <location>
        <position position="228"/>
    </location>
    <ligand>
        <name>isopentenyl diphosphate</name>
        <dbReference type="ChEBI" id="CHEBI:128769"/>
    </ligand>
</feature>
<feature type="binding site" evidence="1">
    <location>
        <position position="271"/>
    </location>
    <ligand>
        <name>(2E)-4-hydroxy-3-methylbut-2-enyl diphosphate</name>
        <dbReference type="ChEBI" id="CHEBI:128753"/>
    </ligand>
</feature>
<feature type="binding site" evidence="1">
    <location>
        <position position="271"/>
    </location>
    <ligand>
        <name>dimethylallyl diphosphate</name>
        <dbReference type="ChEBI" id="CHEBI:57623"/>
    </ligand>
</feature>
<feature type="binding site" evidence="1">
    <location>
        <position position="271"/>
    </location>
    <ligand>
        <name>isopentenyl diphosphate</name>
        <dbReference type="ChEBI" id="CHEBI:128769"/>
    </ligand>
</feature>
<sequence length="311" mass="34593">MEVIKISPRGYCYGVVDAMVLALRTAQNFDLPRPIHILGMIVHNAHVVEAFEKQGIKTLDGEDRLALLDQVQEGTIIFTAHGVSPEVRKKARDKGLTVVDATCPDVTKTHDLIREKVAEGYHVLYIGKKGHPEPEGAMGIAPDHVHLVQKLEELEALDLPTDKLIVTNQTTMSQWDVKHLMDAILKRFPGVEVHNEICLATQVRQEAVAEQVGEADLCIVVGDPRSNNSNRLAQVSEEIADVPSYRIADLFELDIEWLRGKKNVAVTSGASTPTPLTKEVITFLEQFDEFNPATWEKKRTVNMAKILPTVK</sequence>
<keyword id="KW-0004">4Fe-4S</keyword>
<keyword id="KW-0408">Iron</keyword>
<keyword id="KW-0411">Iron-sulfur</keyword>
<keyword id="KW-0414">Isoprene biosynthesis</keyword>
<keyword id="KW-0479">Metal-binding</keyword>
<keyword id="KW-0560">Oxidoreductase</keyword>
<keyword id="KW-1185">Reference proteome</keyword>
<name>ISPH_BREBN</name>
<dbReference type="EC" id="1.17.7.4" evidence="1"/>
<dbReference type="EMBL" id="AP008955">
    <property type="protein sequence ID" value="BAH45900.1"/>
    <property type="molecule type" value="Genomic_DNA"/>
</dbReference>
<dbReference type="RefSeq" id="WP_015893155.1">
    <property type="nucleotide sequence ID" value="NC_012491.1"/>
</dbReference>
<dbReference type="SMR" id="C0ZL73"/>
<dbReference type="STRING" id="358681.BBR47_49230"/>
<dbReference type="KEGG" id="bbe:BBR47_49230"/>
<dbReference type="eggNOG" id="COG0761">
    <property type="taxonomic scope" value="Bacteria"/>
</dbReference>
<dbReference type="HOGENOM" id="CLU_027486_0_0_9"/>
<dbReference type="UniPathway" id="UPA00056">
    <property type="reaction ID" value="UER00097"/>
</dbReference>
<dbReference type="UniPathway" id="UPA00059">
    <property type="reaction ID" value="UER00105"/>
</dbReference>
<dbReference type="Proteomes" id="UP000001877">
    <property type="component" value="Chromosome"/>
</dbReference>
<dbReference type="GO" id="GO:0051539">
    <property type="term" value="F:4 iron, 4 sulfur cluster binding"/>
    <property type="evidence" value="ECO:0007669"/>
    <property type="project" value="UniProtKB-UniRule"/>
</dbReference>
<dbReference type="GO" id="GO:0051745">
    <property type="term" value="F:4-hydroxy-3-methylbut-2-enyl diphosphate reductase activity"/>
    <property type="evidence" value="ECO:0007669"/>
    <property type="project" value="UniProtKB-UniRule"/>
</dbReference>
<dbReference type="GO" id="GO:0046872">
    <property type="term" value="F:metal ion binding"/>
    <property type="evidence" value="ECO:0007669"/>
    <property type="project" value="UniProtKB-KW"/>
</dbReference>
<dbReference type="GO" id="GO:0050992">
    <property type="term" value="P:dimethylallyl diphosphate biosynthetic process"/>
    <property type="evidence" value="ECO:0007669"/>
    <property type="project" value="UniProtKB-UniRule"/>
</dbReference>
<dbReference type="GO" id="GO:0019288">
    <property type="term" value="P:isopentenyl diphosphate biosynthetic process, methylerythritol 4-phosphate pathway"/>
    <property type="evidence" value="ECO:0007669"/>
    <property type="project" value="UniProtKB-UniRule"/>
</dbReference>
<dbReference type="GO" id="GO:0016114">
    <property type="term" value="P:terpenoid biosynthetic process"/>
    <property type="evidence" value="ECO:0007669"/>
    <property type="project" value="UniProtKB-UniRule"/>
</dbReference>
<dbReference type="CDD" id="cd13944">
    <property type="entry name" value="lytB_ispH"/>
    <property type="match status" value="1"/>
</dbReference>
<dbReference type="Gene3D" id="3.40.50.11270">
    <property type="match status" value="1"/>
</dbReference>
<dbReference type="Gene3D" id="3.40.1010.20">
    <property type="entry name" value="4-hydroxy-3-methylbut-2-enyl diphosphate reductase, catalytic domain"/>
    <property type="match status" value="2"/>
</dbReference>
<dbReference type="HAMAP" id="MF_00191">
    <property type="entry name" value="IspH"/>
    <property type="match status" value="1"/>
</dbReference>
<dbReference type="InterPro" id="IPR003451">
    <property type="entry name" value="LytB/IspH"/>
</dbReference>
<dbReference type="NCBIfam" id="TIGR00216">
    <property type="entry name" value="ispH_lytB"/>
    <property type="match status" value="1"/>
</dbReference>
<dbReference type="NCBIfam" id="NF002187">
    <property type="entry name" value="PRK01045.1-1"/>
    <property type="match status" value="1"/>
</dbReference>
<dbReference type="PANTHER" id="PTHR30426">
    <property type="entry name" value="4-HYDROXY-3-METHYLBUT-2-ENYL DIPHOSPHATE REDUCTASE"/>
    <property type="match status" value="1"/>
</dbReference>
<dbReference type="PANTHER" id="PTHR30426:SF0">
    <property type="entry name" value="4-HYDROXY-3-METHYLBUT-2-ENYL DIPHOSPHATE REDUCTASE"/>
    <property type="match status" value="1"/>
</dbReference>
<dbReference type="Pfam" id="PF02401">
    <property type="entry name" value="LYTB"/>
    <property type="match status" value="1"/>
</dbReference>
<comment type="function">
    <text evidence="1">Catalyzes the conversion of 1-hydroxy-2-methyl-2-(E)-butenyl 4-diphosphate (HMBPP) into a mixture of isopentenyl diphosphate (IPP) and dimethylallyl diphosphate (DMAPP). Acts in the terminal step of the DOXP/MEP pathway for isoprenoid precursor biosynthesis.</text>
</comment>
<comment type="catalytic activity">
    <reaction evidence="1">
        <text>isopentenyl diphosphate + 2 oxidized [2Fe-2S]-[ferredoxin] + H2O = (2E)-4-hydroxy-3-methylbut-2-enyl diphosphate + 2 reduced [2Fe-2S]-[ferredoxin] + 2 H(+)</text>
        <dbReference type="Rhea" id="RHEA:24488"/>
        <dbReference type="Rhea" id="RHEA-COMP:10000"/>
        <dbReference type="Rhea" id="RHEA-COMP:10001"/>
        <dbReference type="ChEBI" id="CHEBI:15377"/>
        <dbReference type="ChEBI" id="CHEBI:15378"/>
        <dbReference type="ChEBI" id="CHEBI:33737"/>
        <dbReference type="ChEBI" id="CHEBI:33738"/>
        <dbReference type="ChEBI" id="CHEBI:128753"/>
        <dbReference type="ChEBI" id="CHEBI:128769"/>
        <dbReference type="EC" id="1.17.7.4"/>
    </reaction>
</comment>
<comment type="catalytic activity">
    <reaction evidence="1">
        <text>dimethylallyl diphosphate + 2 oxidized [2Fe-2S]-[ferredoxin] + H2O = (2E)-4-hydroxy-3-methylbut-2-enyl diphosphate + 2 reduced [2Fe-2S]-[ferredoxin] + 2 H(+)</text>
        <dbReference type="Rhea" id="RHEA:24825"/>
        <dbReference type="Rhea" id="RHEA-COMP:10000"/>
        <dbReference type="Rhea" id="RHEA-COMP:10001"/>
        <dbReference type="ChEBI" id="CHEBI:15377"/>
        <dbReference type="ChEBI" id="CHEBI:15378"/>
        <dbReference type="ChEBI" id="CHEBI:33737"/>
        <dbReference type="ChEBI" id="CHEBI:33738"/>
        <dbReference type="ChEBI" id="CHEBI:57623"/>
        <dbReference type="ChEBI" id="CHEBI:128753"/>
        <dbReference type="EC" id="1.17.7.4"/>
    </reaction>
</comment>
<comment type="cofactor">
    <cofactor evidence="1">
        <name>[4Fe-4S] cluster</name>
        <dbReference type="ChEBI" id="CHEBI:49883"/>
    </cofactor>
    <text evidence="1">Binds 1 [4Fe-4S] cluster per subunit.</text>
</comment>
<comment type="pathway">
    <text evidence="1">Isoprenoid biosynthesis; dimethylallyl diphosphate biosynthesis; dimethylallyl diphosphate from (2E)-4-hydroxy-3-methylbutenyl diphosphate: step 1/1.</text>
</comment>
<comment type="pathway">
    <text evidence="1">Isoprenoid biosynthesis; isopentenyl diphosphate biosynthesis via DXP pathway; isopentenyl diphosphate from 1-deoxy-D-xylulose 5-phosphate: step 6/6.</text>
</comment>
<comment type="similarity">
    <text evidence="1">Belongs to the IspH family.</text>
</comment>
<evidence type="ECO:0000255" key="1">
    <source>
        <dbReference type="HAMAP-Rule" id="MF_00191"/>
    </source>
</evidence>
<organism>
    <name type="scientific">Brevibacillus brevis (strain 47 / JCM 6285 / NBRC 100599)</name>
    <dbReference type="NCBI Taxonomy" id="358681"/>
    <lineage>
        <taxon>Bacteria</taxon>
        <taxon>Bacillati</taxon>
        <taxon>Bacillota</taxon>
        <taxon>Bacilli</taxon>
        <taxon>Bacillales</taxon>
        <taxon>Paenibacillaceae</taxon>
        <taxon>Brevibacillus</taxon>
    </lineage>
</organism>
<reference key="1">
    <citation type="submission" date="2005-03" db="EMBL/GenBank/DDBJ databases">
        <title>Brevibacillus brevis strain 47, complete genome.</title>
        <authorList>
            <person name="Hosoyama A."/>
            <person name="Yamada R."/>
            <person name="Hongo Y."/>
            <person name="Terui Y."/>
            <person name="Ankai A."/>
            <person name="Masuyama W."/>
            <person name="Sekiguchi M."/>
            <person name="Takeda T."/>
            <person name="Asano K."/>
            <person name="Ohji S."/>
            <person name="Ichikawa N."/>
            <person name="Narita S."/>
            <person name="Aoki N."/>
            <person name="Miura H."/>
            <person name="Matsushita S."/>
            <person name="Sekigawa T."/>
            <person name="Yamagata H."/>
            <person name="Yoshikawa H."/>
            <person name="Udaka S."/>
            <person name="Tanikawa S."/>
            <person name="Fujita N."/>
        </authorList>
    </citation>
    <scope>NUCLEOTIDE SEQUENCE [LARGE SCALE GENOMIC DNA]</scope>
    <source>
        <strain>47 / JCM 6285 / NBRC 100599</strain>
    </source>
</reference>
<gene>
    <name evidence="1" type="primary">ispH</name>
    <name type="ordered locus">BBR47_49230</name>
</gene>